<organism>
    <name type="scientific">Vanderwaltozyma polyspora (strain ATCC 22028 / DSM 70294 / BCRC 21397 / CBS 2163 / NBRC 10782 / NRRL Y-8283 / UCD 57-17)</name>
    <name type="common">Kluyveromyces polysporus</name>
    <dbReference type="NCBI Taxonomy" id="436907"/>
    <lineage>
        <taxon>Eukaryota</taxon>
        <taxon>Fungi</taxon>
        <taxon>Dikarya</taxon>
        <taxon>Ascomycota</taxon>
        <taxon>Saccharomycotina</taxon>
        <taxon>Saccharomycetes</taxon>
        <taxon>Saccharomycetales</taxon>
        <taxon>Saccharomycetaceae</taxon>
        <taxon>Vanderwaltozyma</taxon>
    </lineage>
</organism>
<comment type="function">
    <text evidence="1">Required for pre-18S rRNA processing. May bind microtubules (By similarity).</text>
</comment>
<comment type="subcellular location">
    <subcellularLocation>
        <location evidence="1">Nucleus</location>
        <location evidence="1">Nucleolus</location>
    </subcellularLocation>
</comment>
<comment type="similarity">
    <text evidence="4">Belongs to the NOP5/NOP56 family.</text>
</comment>
<feature type="chain" id="PRO_0000350994" description="Nucleolar protein 58">
    <location>
        <begin position="1"/>
        <end position="514"/>
    </location>
</feature>
<feature type="domain" description="Nop" evidence="2">
    <location>
        <begin position="283"/>
        <end position="403"/>
    </location>
</feature>
<feature type="region of interest" description="Disordered" evidence="3">
    <location>
        <begin position="430"/>
        <end position="514"/>
    </location>
</feature>
<feature type="compositionally biased region" description="Acidic residues" evidence="3">
    <location>
        <begin position="439"/>
        <end position="450"/>
    </location>
</feature>
<feature type="compositionally biased region" description="Basic residues" evidence="3">
    <location>
        <begin position="454"/>
        <end position="477"/>
    </location>
</feature>
<feature type="compositionally biased region" description="Basic residues" evidence="3">
    <location>
        <begin position="488"/>
        <end position="514"/>
    </location>
</feature>
<protein>
    <recommendedName>
        <fullName>Nucleolar protein 58</fullName>
    </recommendedName>
</protein>
<gene>
    <name type="primary">NOP58</name>
    <name type="ORF">Kpol_1010p5</name>
</gene>
<accession>A7TIF5</accession>
<proteinExistence type="inferred from homology"/>
<reference key="1">
    <citation type="journal article" date="2007" name="Proc. Natl. Acad. Sci. U.S.A.">
        <title>Independent sorting-out of thousands of duplicated gene pairs in two yeast species descended from a whole-genome duplication.</title>
        <authorList>
            <person name="Scannell D.R."/>
            <person name="Frank A.C."/>
            <person name="Conant G.C."/>
            <person name="Byrne K.P."/>
            <person name="Woolfit M."/>
            <person name="Wolfe K.H."/>
        </authorList>
    </citation>
    <scope>NUCLEOTIDE SEQUENCE [LARGE SCALE GENOMIC DNA]</scope>
    <source>
        <strain>ATCC 22028 / DSM 70294 / BCRC 21397 / CBS 2163 / NBRC 10782 / NRRL Y-8283 / UCD 57-17</strain>
    </source>
</reference>
<dbReference type="EMBL" id="DS480396">
    <property type="protein sequence ID" value="EDO17893.1"/>
    <property type="molecule type" value="Genomic_DNA"/>
</dbReference>
<dbReference type="RefSeq" id="XP_001645751.1">
    <property type="nucleotide sequence ID" value="XM_001645701.1"/>
</dbReference>
<dbReference type="SMR" id="A7TIF5"/>
<dbReference type="FunCoup" id="A7TIF5">
    <property type="interactions" value="1752"/>
</dbReference>
<dbReference type="STRING" id="436907.A7TIF5"/>
<dbReference type="GeneID" id="5546142"/>
<dbReference type="KEGG" id="vpo:Kpol_1010p5"/>
<dbReference type="eggNOG" id="KOG2572">
    <property type="taxonomic scope" value="Eukaryota"/>
</dbReference>
<dbReference type="HOGENOM" id="CLU_015495_5_2_1"/>
<dbReference type="InParanoid" id="A7TIF5"/>
<dbReference type="OMA" id="MGMRSNW"/>
<dbReference type="OrthoDB" id="6780543at2759"/>
<dbReference type="PhylomeDB" id="A7TIF5"/>
<dbReference type="Proteomes" id="UP000000267">
    <property type="component" value="Unassembled WGS sequence"/>
</dbReference>
<dbReference type="GO" id="GO:0031428">
    <property type="term" value="C:box C/D methylation guide snoRNP complex"/>
    <property type="evidence" value="ECO:0007669"/>
    <property type="project" value="EnsemblFungi"/>
</dbReference>
<dbReference type="GO" id="GO:0005730">
    <property type="term" value="C:nucleolus"/>
    <property type="evidence" value="ECO:0007669"/>
    <property type="project" value="UniProtKB-SubCell"/>
</dbReference>
<dbReference type="GO" id="GO:0032040">
    <property type="term" value="C:small-subunit processome"/>
    <property type="evidence" value="ECO:0007669"/>
    <property type="project" value="EnsemblFungi"/>
</dbReference>
<dbReference type="GO" id="GO:0030515">
    <property type="term" value="F:snoRNA binding"/>
    <property type="evidence" value="ECO:0007669"/>
    <property type="project" value="InterPro"/>
</dbReference>
<dbReference type="GO" id="GO:0017069">
    <property type="term" value="F:snRNA binding"/>
    <property type="evidence" value="ECO:0007669"/>
    <property type="project" value="EnsemblFungi"/>
</dbReference>
<dbReference type="GO" id="GO:0000494">
    <property type="term" value="P:box C/D sno(s)RNA 3'-end processing"/>
    <property type="evidence" value="ECO:0007669"/>
    <property type="project" value="EnsemblFungi"/>
</dbReference>
<dbReference type="GO" id="GO:0000480">
    <property type="term" value="P:endonucleolytic cleavage in 5'-ETS of tricistronic rRNA transcript (SSU-rRNA, 5.8S rRNA, LSU-rRNA)"/>
    <property type="evidence" value="ECO:0007669"/>
    <property type="project" value="EnsemblFungi"/>
</dbReference>
<dbReference type="GO" id="GO:0000447">
    <property type="term" value="P:endonucleolytic cleavage in ITS1 to separate SSU-rRNA from 5.8S rRNA and LSU-rRNA from tricistronic rRNA transcript (SSU-rRNA, 5.8S rRNA, LSU-rRNA)"/>
    <property type="evidence" value="ECO:0007669"/>
    <property type="project" value="EnsemblFungi"/>
</dbReference>
<dbReference type="GO" id="GO:0000472">
    <property type="term" value="P:endonucleolytic cleavage to generate mature 5'-end of SSU-rRNA from (SSU-rRNA, 5.8S rRNA, LSU-rRNA)"/>
    <property type="evidence" value="ECO:0007669"/>
    <property type="project" value="EnsemblFungi"/>
</dbReference>
<dbReference type="GO" id="GO:1902570">
    <property type="term" value="P:protein localization to nucleolus"/>
    <property type="evidence" value="ECO:0007669"/>
    <property type="project" value="EnsemblFungi"/>
</dbReference>
<dbReference type="GO" id="GO:0000452">
    <property type="term" value="P:snoRNA guided rRNA 2'-O-methylation"/>
    <property type="evidence" value="ECO:0007669"/>
    <property type="project" value="EnsemblFungi"/>
</dbReference>
<dbReference type="FunFam" id="1.10.246.90:FF:000003">
    <property type="entry name" value="Nucleolar protein 58"/>
    <property type="match status" value="1"/>
</dbReference>
<dbReference type="FunFam" id="1.10.287.4070:FF:000001">
    <property type="entry name" value="Probable Nucleolar protein 58"/>
    <property type="match status" value="1"/>
</dbReference>
<dbReference type="Gene3D" id="1.10.287.4070">
    <property type="match status" value="1"/>
</dbReference>
<dbReference type="Gene3D" id="1.10.246.90">
    <property type="entry name" value="Nop domain"/>
    <property type="match status" value="1"/>
</dbReference>
<dbReference type="InterPro" id="IPR045056">
    <property type="entry name" value="Nop56/Nop58"/>
</dbReference>
<dbReference type="InterPro" id="IPR012974">
    <property type="entry name" value="NOP58/56_N"/>
</dbReference>
<dbReference type="InterPro" id="IPR042239">
    <property type="entry name" value="Nop_C"/>
</dbReference>
<dbReference type="InterPro" id="IPR002687">
    <property type="entry name" value="Nop_dom"/>
</dbReference>
<dbReference type="InterPro" id="IPR036070">
    <property type="entry name" value="Nop_dom_sf"/>
</dbReference>
<dbReference type="InterPro" id="IPR012976">
    <property type="entry name" value="NOSIC"/>
</dbReference>
<dbReference type="PANTHER" id="PTHR10894">
    <property type="entry name" value="NUCLEOLAR PROTEIN 5 NUCLEOLAR PROTEIN NOP5 NOP58"/>
    <property type="match status" value="1"/>
</dbReference>
<dbReference type="PANTHER" id="PTHR10894:SF1">
    <property type="entry name" value="NUCLEOLAR PROTEIN 58"/>
    <property type="match status" value="1"/>
</dbReference>
<dbReference type="Pfam" id="PF01798">
    <property type="entry name" value="Nop"/>
    <property type="match status" value="1"/>
</dbReference>
<dbReference type="Pfam" id="PF08156">
    <property type="entry name" value="NOP5NT"/>
    <property type="match status" value="1"/>
</dbReference>
<dbReference type="SMART" id="SM00931">
    <property type="entry name" value="NOSIC"/>
    <property type="match status" value="1"/>
</dbReference>
<dbReference type="SUPFAM" id="SSF89124">
    <property type="entry name" value="Nop domain"/>
    <property type="match status" value="1"/>
</dbReference>
<dbReference type="PROSITE" id="PS51358">
    <property type="entry name" value="NOP"/>
    <property type="match status" value="1"/>
</dbReference>
<sequence length="514" mass="57190">MAYVLTETSAGYALLKASDKKIYKSSSLIQDLDSSDKVLKEFKIAAFSKFNSAANALEEANSIIEGKVSPQLQKLLEEAKKDKKSTLVVSETKLANAINKLGLNFNVVSDAVTLDIYRAVKEYLPDLLPGLNDTDLSKMSLGLAHSIGRHKLKFSADKVDVMIIQAIALLDDLDKELNTYAMRCKEWYGWHFPELAKIVTDSVAYARIILAMGVRSKCADTDLSEILPEEVEERVKTAAEVSMGTEITETDLDNIKALADQIVDFAAYREQLSNYLSSRMKAIAPNLTQLVGELVGARLIAHSGSLISLAKSPASTIQILGAEKALFRALKTKHDTPKYGLLYHASLVGQATGKNKGKIARVLAAKAAVSLRYDALAEDRDDSGDIGLEARAKVENRLSQLEGRDLRTTPKVVREAKKVEITEARAYNADADTAAVEESASDSDDEEEEEDKKKEKKEKKDKKDKKDKKDKKDKKRKRDEEDEEKKESKKSKKDKKEKKEKKDKKDKKSKKEKK</sequence>
<name>NOP58_VANPO</name>
<keyword id="KW-0539">Nucleus</keyword>
<keyword id="KW-1185">Reference proteome</keyword>
<keyword id="KW-0687">Ribonucleoprotein</keyword>
<keyword id="KW-0690">Ribosome biogenesis</keyword>
<keyword id="KW-0698">rRNA processing</keyword>
<evidence type="ECO:0000250" key="1"/>
<evidence type="ECO:0000255" key="2">
    <source>
        <dbReference type="PROSITE-ProRule" id="PRU00690"/>
    </source>
</evidence>
<evidence type="ECO:0000256" key="3">
    <source>
        <dbReference type="SAM" id="MobiDB-lite"/>
    </source>
</evidence>
<evidence type="ECO:0000305" key="4"/>